<protein>
    <recommendedName>
        <fullName>Fork head domain-containing protein FD5</fullName>
    </recommendedName>
</protein>
<proteinExistence type="evidence at transcript level"/>
<evidence type="ECO:0000255" key="1">
    <source>
        <dbReference type="PROSITE-ProRule" id="PRU00089"/>
    </source>
</evidence>
<evidence type="ECO:0000269" key="2">
    <source>
    </source>
</evidence>
<evidence type="ECO:0000305" key="3"/>
<name>FD5_DROME</name>
<reference key="1">
    <citation type="journal article" date="2000" name="Science">
        <title>The genome sequence of Drosophila melanogaster.</title>
        <authorList>
            <person name="Adams M.D."/>
            <person name="Celniker S.E."/>
            <person name="Holt R.A."/>
            <person name="Evans C.A."/>
            <person name="Gocayne J.D."/>
            <person name="Amanatides P.G."/>
            <person name="Scherer S.E."/>
            <person name="Li P.W."/>
            <person name="Hoskins R.A."/>
            <person name="Galle R.F."/>
            <person name="George R.A."/>
            <person name="Lewis S.E."/>
            <person name="Richards S."/>
            <person name="Ashburner M."/>
            <person name="Henderson S.N."/>
            <person name="Sutton G.G."/>
            <person name="Wortman J.R."/>
            <person name="Yandell M.D."/>
            <person name="Zhang Q."/>
            <person name="Chen L.X."/>
            <person name="Brandon R.C."/>
            <person name="Rogers Y.-H.C."/>
            <person name="Blazej R.G."/>
            <person name="Champe M."/>
            <person name="Pfeiffer B.D."/>
            <person name="Wan K.H."/>
            <person name="Doyle C."/>
            <person name="Baxter E.G."/>
            <person name="Helt G."/>
            <person name="Nelson C.R."/>
            <person name="Miklos G.L.G."/>
            <person name="Abril J.F."/>
            <person name="Agbayani A."/>
            <person name="An H.-J."/>
            <person name="Andrews-Pfannkoch C."/>
            <person name="Baldwin D."/>
            <person name="Ballew R.M."/>
            <person name="Basu A."/>
            <person name="Baxendale J."/>
            <person name="Bayraktaroglu L."/>
            <person name="Beasley E.M."/>
            <person name="Beeson K.Y."/>
            <person name="Benos P.V."/>
            <person name="Berman B.P."/>
            <person name="Bhandari D."/>
            <person name="Bolshakov S."/>
            <person name="Borkova D."/>
            <person name="Botchan M.R."/>
            <person name="Bouck J."/>
            <person name="Brokstein P."/>
            <person name="Brottier P."/>
            <person name="Burtis K.C."/>
            <person name="Busam D.A."/>
            <person name="Butler H."/>
            <person name="Cadieu E."/>
            <person name="Center A."/>
            <person name="Chandra I."/>
            <person name="Cherry J.M."/>
            <person name="Cawley S."/>
            <person name="Dahlke C."/>
            <person name="Davenport L.B."/>
            <person name="Davies P."/>
            <person name="de Pablos B."/>
            <person name="Delcher A."/>
            <person name="Deng Z."/>
            <person name="Mays A.D."/>
            <person name="Dew I."/>
            <person name="Dietz S.M."/>
            <person name="Dodson K."/>
            <person name="Doup L.E."/>
            <person name="Downes M."/>
            <person name="Dugan-Rocha S."/>
            <person name="Dunkov B.C."/>
            <person name="Dunn P."/>
            <person name="Durbin K.J."/>
            <person name="Evangelista C.C."/>
            <person name="Ferraz C."/>
            <person name="Ferriera S."/>
            <person name="Fleischmann W."/>
            <person name="Fosler C."/>
            <person name="Gabrielian A.E."/>
            <person name="Garg N.S."/>
            <person name="Gelbart W.M."/>
            <person name="Glasser K."/>
            <person name="Glodek A."/>
            <person name="Gong F."/>
            <person name="Gorrell J.H."/>
            <person name="Gu Z."/>
            <person name="Guan P."/>
            <person name="Harris M."/>
            <person name="Harris N.L."/>
            <person name="Harvey D.A."/>
            <person name="Heiman T.J."/>
            <person name="Hernandez J.R."/>
            <person name="Houck J."/>
            <person name="Hostin D."/>
            <person name="Houston K.A."/>
            <person name="Howland T.J."/>
            <person name="Wei M.-H."/>
            <person name="Ibegwam C."/>
            <person name="Jalali M."/>
            <person name="Kalush F."/>
            <person name="Karpen G.H."/>
            <person name="Ke Z."/>
            <person name="Kennison J.A."/>
            <person name="Ketchum K.A."/>
            <person name="Kimmel B.E."/>
            <person name="Kodira C.D."/>
            <person name="Kraft C.L."/>
            <person name="Kravitz S."/>
            <person name="Kulp D."/>
            <person name="Lai Z."/>
            <person name="Lasko P."/>
            <person name="Lei Y."/>
            <person name="Levitsky A.A."/>
            <person name="Li J.H."/>
            <person name="Li Z."/>
            <person name="Liang Y."/>
            <person name="Lin X."/>
            <person name="Liu X."/>
            <person name="Mattei B."/>
            <person name="McIntosh T.C."/>
            <person name="McLeod M.P."/>
            <person name="McPherson D."/>
            <person name="Merkulov G."/>
            <person name="Milshina N.V."/>
            <person name="Mobarry C."/>
            <person name="Morris J."/>
            <person name="Moshrefi A."/>
            <person name="Mount S.M."/>
            <person name="Moy M."/>
            <person name="Murphy B."/>
            <person name="Murphy L."/>
            <person name="Muzny D.M."/>
            <person name="Nelson D.L."/>
            <person name="Nelson D.R."/>
            <person name="Nelson K.A."/>
            <person name="Nixon K."/>
            <person name="Nusskern D.R."/>
            <person name="Pacleb J.M."/>
            <person name="Palazzolo M."/>
            <person name="Pittman G.S."/>
            <person name="Pan S."/>
            <person name="Pollard J."/>
            <person name="Puri V."/>
            <person name="Reese M.G."/>
            <person name="Reinert K."/>
            <person name="Remington K."/>
            <person name="Saunders R.D.C."/>
            <person name="Scheeler F."/>
            <person name="Shen H."/>
            <person name="Shue B.C."/>
            <person name="Siden-Kiamos I."/>
            <person name="Simpson M."/>
            <person name="Skupski M.P."/>
            <person name="Smith T.J."/>
            <person name="Spier E."/>
            <person name="Spradling A.C."/>
            <person name="Stapleton M."/>
            <person name="Strong R."/>
            <person name="Sun E."/>
            <person name="Svirskas R."/>
            <person name="Tector C."/>
            <person name="Turner R."/>
            <person name="Venter E."/>
            <person name="Wang A.H."/>
            <person name="Wang X."/>
            <person name="Wang Z.-Y."/>
            <person name="Wassarman D.A."/>
            <person name="Weinstock G.M."/>
            <person name="Weissenbach J."/>
            <person name="Williams S.M."/>
            <person name="Woodage T."/>
            <person name="Worley K.C."/>
            <person name="Wu D."/>
            <person name="Yang S."/>
            <person name="Yao Q.A."/>
            <person name="Ye J."/>
            <person name="Yeh R.-F."/>
            <person name="Zaveri J.S."/>
            <person name="Zhan M."/>
            <person name="Zhang G."/>
            <person name="Zhao Q."/>
            <person name="Zheng L."/>
            <person name="Zheng X.H."/>
            <person name="Zhong F.N."/>
            <person name="Zhong W."/>
            <person name="Zhou X."/>
            <person name="Zhu S.C."/>
            <person name="Zhu X."/>
            <person name="Smith H.O."/>
            <person name="Gibbs R.A."/>
            <person name="Myers E.W."/>
            <person name="Rubin G.M."/>
            <person name="Venter J.C."/>
        </authorList>
    </citation>
    <scope>NUCLEOTIDE SEQUENCE [LARGE SCALE GENOMIC DNA]</scope>
    <source>
        <strain>Berkeley</strain>
    </source>
</reference>
<reference key="2">
    <citation type="journal article" date="2002" name="Genome Biol.">
        <title>Annotation of the Drosophila melanogaster euchromatic genome: a systematic review.</title>
        <authorList>
            <person name="Misra S."/>
            <person name="Crosby M.A."/>
            <person name="Mungall C.J."/>
            <person name="Matthews B.B."/>
            <person name="Campbell K.S."/>
            <person name="Hradecky P."/>
            <person name="Huang Y."/>
            <person name="Kaminker J.S."/>
            <person name="Millburn G.H."/>
            <person name="Prochnik S.E."/>
            <person name="Smith C.D."/>
            <person name="Tupy J.L."/>
            <person name="Whitfield E.J."/>
            <person name="Bayraktaroglu L."/>
            <person name="Berman B.P."/>
            <person name="Bettencourt B.R."/>
            <person name="Celniker S.E."/>
            <person name="de Grey A.D.N.J."/>
            <person name="Drysdale R.A."/>
            <person name="Harris N.L."/>
            <person name="Richter J."/>
            <person name="Russo S."/>
            <person name="Schroeder A.J."/>
            <person name="Shu S.Q."/>
            <person name="Stapleton M."/>
            <person name="Yamada C."/>
            <person name="Ashburner M."/>
            <person name="Gelbart W.M."/>
            <person name="Rubin G.M."/>
            <person name="Lewis S.E."/>
        </authorList>
    </citation>
    <scope>GENOME REANNOTATION</scope>
    <source>
        <strain>Berkeley</strain>
    </source>
</reference>
<reference key="3">
    <citation type="submission" date="2006-10" db="EMBL/GenBank/DDBJ databases">
        <authorList>
            <person name="Stapleton M."/>
            <person name="Carlson J.W."/>
            <person name="Frise E."/>
            <person name="Kapadia B."/>
            <person name="Park S."/>
            <person name="Wan K.H."/>
            <person name="Yu C."/>
            <person name="Celniker S.E."/>
        </authorList>
    </citation>
    <scope>NUCLEOTIDE SEQUENCE [LARGE SCALE MRNA]</scope>
    <source>
        <strain>Berkeley</strain>
        <tissue>Embryo</tissue>
    </source>
</reference>
<reference key="4">
    <citation type="journal article" date="1992" name="Proc. Natl. Acad. Sci. U.S.A.">
        <title>Developmentally regulated Drosophila gene family encoding the fork head domain.</title>
        <authorList>
            <person name="Haecker U."/>
            <person name="Grossniklaus U."/>
            <person name="Gehring W.J."/>
            <person name="Jaeckle H."/>
        </authorList>
    </citation>
    <scope>NUCLEOTIDE SEQUENCE [GENOMIC DNA] OF 1-125</scope>
    <scope>FUNCTION</scope>
    <scope>TISSUE SPECIFICITY</scope>
    <scope>DEVELOPMENTAL STAGE</scope>
</reference>
<feature type="chain" id="PRO_0000091913" description="Fork head domain-containing protein FD5">
    <location>
        <begin position="1"/>
        <end position="271"/>
    </location>
</feature>
<feature type="DNA-binding region" description="Fork-head" evidence="1">
    <location>
        <begin position="12"/>
        <end position="103"/>
    </location>
</feature>
<feature type="sequence conflict" description="In Ref. 4; AAF02178." evidence="3" ref="4">
    <original>LL</original>
    <variation>FV</variation>
    <location>
        <begin position="33"/>
        <end position="34"/>
    </location>
</feature>
<dbReference type="EMBL" id="AE014297">
    <property type="protein sequence ID" value="AAF56397.1"/>
    <property type="molecule type" value="Genomic_DNA"/>
</dbReference>
<dbReference type="EMBL" id="BT028866">
    <property type="protein sequence ID" value="ABI34247.2"/>
    <property type="molecule type" value="mRNA"/>
</dbReference>
<dbReference type="EMBL" id="M96444">
    <property type="protein sequence ID" value="AAF02178.1"/>
    <property type="status" value="ALT_INIT"/>
    <property type="molecule type" value="Genomic_DNA"/>
</dbReference>
<dbReference type="PIR" id="E46178">
    <property type="entry name" value="E46178"/>
</dbReference>
<dbReference type="RefSeq" id="NP_524496.1">
    <property type="nucleotide sequence ID" value="NM_079772.2"/>
</dbReference>
<dbReference type="SMR" id="P32029"/>
<dbReference type="BioGRID" id="67932">
    <property type="interactions" value="7"/>
</dbReference>
<dbReference type="FunCoup" id="P32029">
    <property type="interactions" value="1"/>
</dbReference>
<dbReference type="IntAct" id="P32029">
    <property type="interactions" value="6"/>
</dbReference>
<dbReference type="STRING" id="7227.FBpp0084146"/>
<dbReference type="PaxDb" id="7227-FBpp0084146"/>
<dbReference type="DNASU" id="43011"/>
<dbReference type="EnsemblMetazoa" id="FBtr0084771">
    <property type="protein sequence ID" value="FBpp0084146"/>
    <property type="gene ID" value="FBgn0004898"/>
</dbReference>
<dbReference type="GeneID" id="43011"/>
<dbReference type="KEGG" id="dme:Dmel_CG11922"/>
<dbReference type="AGR" id="FB:FBgn0004898"/>
<dbReference type="CTD" id="43011"/>
<dbReference type="FlyBase" id="FBgn0004898">
    <property type="gene designation" value="fd96Cb"/>
</dbReference>
<dbReference type="VEuPathDB" id="VectorBase:FBgn0004898"/>
<dbReference type="eggNOG" id="KOG3562">
    <property type="taxonomic scope" value="Eukaryota"/>
</dbReference>
<dbReference type="GeneTree" id="ENSGT00940000160522"/>
<dbReference type="HOGENOM" id="CLU_084871_0_0_1"/>
<dbReference type="InParanoid" id="P32029"/>
<dbReference type="OMA" id="PCYQKTP"/>
<dbReference type="OrthoDB" id="5954824at2759"/>
<dbReference type="PhylomeDB" id="P32029"/>
<dbReference type="BioGRID-ORCS" id="43011">
    <property type="hits" value="0 hits in 3 CRISPR screens"/>
</dbReference>
<dbReference type="GenomeRNAi" id="43011"/>
<dbReference type="PRO" id="PR:P32029"/>
<dbReference type="Proteomes" id="UP000000803">
    <property type="component" value="Chromosome 3R"/>
</dbReference>
<dbReference type="Bgee" id="FBgn0004898">
    <property type="expression patterns" value="Expressed in neuron of aristal sensillum (Drosophila) in antenna and 13 other cell types or tissues"/>
</dbReference>
<dbReference type="ExpressionAtlas" id="P32029">
    <property type="expression patterns" value="baseline and differential"/>
</dbReference>
<dbReference type="GO" id="GO:0005634">
    <property type="term" value="C:nucleus"/>
    <property type="evidence" value="ECO:0007669"/>
    <property type="project" value="UniProtKB-SubCell"/>
</dbReference>
<dbReference type="GO" id="GO:0000981">
    <property type="term" value="F:DNA-binding transcription factor activity, RNA polymerase II-specific"/>
    <property type="evidence" value="ECO:0000318"/>
    <property type="project" value="GO_Central"/>
</dbReference>
<dbReference type="GO" id="GO:0000978">
    <property type="term" value="F:RNA polymerase II cis-regulatory region sequence-specific DNA binding"/>
    <property type="evidence" value="ECO:0000318"/>
    <property type="project" value="GO_Central"/>
</dbReference>
<dbReference type="GO" id="GO:0009653">
    <property type="term" value="P:anatomical structure morphogenesis"/>
    <property type="evidence" value="ECO:0000318"/>
    <property type="project" value="GO_Central"/>
</dbReference>
<dbReference type="GO" id="GO:0030154">
    <property type="term" value="P:cell differentiation"/>
    <property type="evidence" value="ECO:0000318"/>
    <property type="project" value="GO_Central"/>
</dbReference>
<dbReference type="GO" id="GO:0006357">
    <property type="term" value="P:regulation of transcription by RNA polymerase II"/>
    <property type="evidence" value="ECO:0000318"/>
    <property type="project" value="GO_Central"/>
</dbReference>
<dbReference type="FunFam" id="1.10.10.10:FF:000082">
    <property type="entry name" value="forkhead box protein B2"/>
    <property type="match status" value="1"/>
</dbReference>
<dbReference type="Gene3D" id="1.10.10.10">
    <property type="entry name" value="Winged helix-like DNA-binding domain superfamily/Winged helix DNA-binding domain"/>
    <property type="match status" value="1"/>
</dbReference>
<dbReference type="InterPro" id="IPR001766">
    <property type="entry name" value="Fork_head_dom"/>
</dbReference>
<dbReference type="InterPro" id="IPR050211">
    <property type="entry name" value="FOX_domain-containing"/>
</dbReference>
<dbReference type="InterPro" id="IPR018122">
    <property type="entry name" value="TF_fork_head_CS_1"/>
</dbReference>
<dbReference type="InterPro" id="IPR030456">
    <property type="entry name" value="TF_fork_head_CS_2"/>
</dbReference>
<dbReference type="InterPro" id="IPR036388">
    <property type="entry name" value="WH-like_DNA-bd_sf"/>
</dbReference>
<dbReference type="InterPro" id="IPR036390">
    <property type="entry name" value="WH_DNA-bd_sf"/>
</dbReference>
<dbReference type="PANTHER" id="PTHR11829:SF377">
    <property type="entry name" value="FORK HEAD DOMAIN-CONTAINING PROTEIN FD4-RELATED"/>
    <property type="match status" value="1"/>
</dbReference>
<dbReference type="PANTHER" id="PTHR11829">
    <property type="entry name" value="FORKHEAD BOX PROTEIN"/>
    <property type="match status" value="1"/>
</dbReference>
<dbReference type="Pfam" id="PF00250">
    <property type="entry name" value="Forkhead"/>
    <property type="match status" value="1"/>
</dbReference>
<dbReference type="PRINTS" id="PR00053">
    <property type="entry name" value="FORKHEAD"/>
</dbReference>
<dbReference type="SMART" id="SM00339">
    <property type="entry name" value="FH"/>
    <property type="match status" value="1"/>
</dbReference>
<dbReference type="SUPFAM" id="SSF46785">
    <property type="entry name" value="Winged helix' DNA-binding domain"/>
    <property type="match status" value="1"/>
</dbReference>
<dbReference type="PROSITE" id="PS00657">
    <property type="entry name" value="FORK_HEAD_1"/>
    <property type="match status" value="1"/>
</dbReference>
<dbReference type="PROSITE" id="PS00658">
    <property type="entry name" value="FORK_HEAD_2"/>
    <property type="match status" value="1"/>
</dbReference>
<dbReference type="PROSITE" id="PS50039">
    <property type="entry name" value="FORK_HEAD_3"/>
    <property type="match status" value="1"/>
</dbReference>
<accession>P32029</accession>
<accession>Q0IGQ4</accession>
<accession>Q9VBY0</accession>
<keyword id="KW-0217">Developmental protein</keyword>
<keyword id="KW-0238">DNA-binding</keyword>
<keyword id="KW-0539">Nucleus</keyword>
<keyword id="KW-1185">Reference proteome</keyword>
<keyword id="KW-0804">Transcription</keyword>
<keyword id="KW-0805">Transcription regulation</keyword>
<sequence length="271" mass="31013">MPRPLKMSYGDQKPPYSYISLTAMAIIHSPQRLLPLSEIYRFIMDQFPFYRKNTQKWQNSLRHNLSFNDCFIKVPRNVTKAGKGSYWTLHPMAFDMFENGSLLRRRKRFRVKQLEKDISNWKLAAAANTEMVTHYLDDQLTQMAFADPARHGHVLANASAAQMSPYKATPPILPTTVTQLPARPKRAFTIESLMAPDPASTPNEGLVPMEYGSPDAVALEKPPFNLPFNFNELAAQYQLYFPSFFYNGQYGNIPCYQKTPPLFHNGPLPVF</sequence>
<organism>
    <name type="scientific">Drosophila melanogaster</name>
    <name type="common">Fruit fly</name>
    <dbReference type="NCBI Taxonomy" id="7227"/>
    <lineage>
        <taxon>Eukaryota</taxon>
        <taxon>Metazoa</taxon>
        <taxon>Ecdysozoa</taxon>
        <taxon>Arthropoda</taxon>
        <taxon>Hexapoda</taxon>
        <taxon>Insecta</taxon>
        <taxon>Pterygota</taxon>
        <taxon>Neoptera</taxon>
        <taxon>Endopterygota</taxon>
        <taxon>Diptera</taxon>
        <taxon>Brachycera</taxon>
        <taxon>Muscomorpha</taxon>
        <taxon>Ephydroidea</taxon>
        <taxon>Drosophilidae</taxon>
        <taxon>Drosophila</taxon>
        <taxon>Sophophora</taxon>
    </lineage>
</organism>
<comment type="function">
    <text evidence="2">Involved in development during embryogenesis.</text>
</comment>
<comment type="subcellular location">
    <subcellularLocation>
        <location>Nucleus</location>
    </subcellularLocation>
</comment>
<comment type="tissue specificity">
    <text evidence="2">Expressed in early embryogenesis in 14 symmetrical pairs of segmentally arranged neuroblasts and in developing peripheral nervous system. Also, later in embryogenesis, in a cluster of cells in head region.</text>
</comment>
<comment type="developmental stage">
    <text evidence="2">Expressed in embryos (maximal level between 5-12 hours) and at a low level in larvae.</text>
</comment>
<comment type="sequence caution" evidence="3">
    <conflict type="erroneous initiation">
        <sequence resource="EMBL-CDS" id="AAF02178"/>
    </conflict>
</comment>
<gene>
    <name type="primary">fd96Cb</name>
    <name type="synonym">FD5</name>
    <name type="ORF">CG11922</name>
</gene>